<gene>
    <name evidence="5" type="primary">rasl11b</name>
</gene>
<protein>
    <recommendedName>
        <fullName>Ras-like protein family member 11B</fullName>
        <ecNumber evidence="1">3.6.5.2</ecNumber>
    </recommendedName>
</protein>
<feature type="chain" id="PRO_0000308369" description="Ras-like protein family member 11B">
    <location>
        <begin position="1"/>
        <end position="248"/>
    </location>
</feature>
<feature type="region of interest" description="Small GTPase-like">
    <location>
        <begin position="30"/>
        <end position="248"/>
    </location>
</feature>
<feature type="region of interest" description="Disordered" evidence="4">
    <location>
        <begin position="206"/>
        <end position="228"/>
    </location>
</feature>
<feature type="binding site" evidence="2">
    <location>
        <begin position="41"/>
        <end position="48"/>
    </location>
    <ligand>
        <name>GTP</name>
        <dbReference type="ChEBI" id="CHEBI:37565"/>
    </ligand>
</feature>
<feature type="binding site" evidence="2">
    <location>
        <begin position="88"/>
        <end position="99"/>
    </location>
    <ligand>
        <name>GTP</name>
        <dbReference type="ChEBI" id="CHEBI:37565"/>
    </ligand>
</feature>
<feature type="binding site" evidence="2">
    <location>
        <begin position="153"/>
        <end position="156"/>
    </location>
    <ligand>
        <name>GTP</name>
        <dbReference type="ChEBI" id="CHEBI:37565"/>
    </ligand>
</feature>
<organism>
    <name type="scientific">Xenopus laevis</name>
    <name type="common">African clawed frog</name>
    <dbReference type="NCBI Taxonomy" id="8355"/>
    <lineage>
        <taxon>Eukaryota</taxon>
        <taxon>Metazoa</taxon>
        <taxon>Chordata</taxon>
        <taxon>Craniata</taxon>
        <taxon>Vertebrata</taxon>
        <taxon>Euteleostomi</taxon>
        <taxon>Amphibia</taxon>
        <taxon>Batrachia</taxon>
        <taxon>Anura</taxon>
        <taxon>Pipoidea</taxon>
        <taxon>Pipidae</taxon>
        <taxon>Xenopodinae</taxon>
        <taxon>Xenopus</taxon>
        <taxon>Xenopus</taxon>
    </lineage>
</organism>
<dbReference type="EC" id="3.6.5.2" evidence="1"/>
<dbReference type="EMBL" id="BC041294">
    <property type="protein sequence ID" value="AAH41294.1"/>
    <property type="molecule type" value="mRNA"/>
</dbReference>
<dbReference type="EMBL" id="BK001713">
    <property type="protein sequence ID" value="DAA02255.1"/>
    <property type="molecule type" value="mRNA"/>
</dbReference>
<dbReference type="SMR" id="Q8AVS6"/>
<dbReference type="DNASU" id="379082"/>
<dbReference type="KEGG" id="xla:379082"/>
<dbReference type="AGR" id="Xenbase:XB-GENE-866025"/>
<dbReference type="CTD" id="379082"/>
<dbReference type="Xenbase" id="XB-GENE-866025">
    <property type="gene designation" value="rasl11b.L"/>
</dbReference>
<dbReference type="OMA" id="KEVEPQH"/>
<dbReference type="OrthoDB" id="18798at2759"/>
<dbReference type="Proteomes" id="UP000186698">
    <property type="component" value="Chromosome 1L"/>
</dbReference>
<dbReference type="Bgee" id="379082">
    <property type="expression patterns" value="Expressed in internal ear and 19 other cell types or tissues"/>
</dbReference>
<dbReference type="GO" id="GO:0003925">
    <property type="term" value="F:G protein activity"/>
    <property type="evidence" value="ECO:0007669"/>
    <property type="project" value="UniProtKB-EC"/>
</dbReference>
<dbReference type="GO" id="GO:0005525">
    <property type="term" value="F:GTP binding"/>
    <property type="evidence" value="ECO:0007669"/>
    <property type="project" value="UniProtKB-KW"/>
</dbReference>
<dbReference type="CDD" id="cd04146">
    <property type="entry name" value="RERG_RasL11_like"/>
    <property type="match status" value="1"/>
</dbReference>
<dbReference type="FunFam" id="3.40.50.300:FF:000718">
    <property type="entry name" value="Ras-like protein family member 11A"/>
    <property type="match status" value="1"/>
</dbReference>
<dbReference type="Gene3D" id="3.40.50.300">
    <property type="entry name" value="P-loop containing nucleotide triphosphate hydrolases"/>
    <property type="match status" value="1"/>
</dbReference>
<dbReference type="InterPro" id="IPR027417">
    <property type="entry name" value="P-loop_NTPase"/>
</dbReference>
<dbReference type="InterPro" id="IPR051065">
    <property type="entry name" value="Ras-related_GTPase"/>
</dbReference>
<dbReference type="InterPro" id="IPR005225">
    <property type="entry name" value="Small_GTP-bd"/>
</dbReference>
<dbReference type="InterPro" id="IPR001806">
    <property type="entry name" value="Small_GTPase"/>
</dbReference>
<dbReference type="NCBIfam" id="TIGR00231">
    <property type="entry name" value="small_GTP"/>
    <property type="match status" value="1"/>
</dbReference>
<dbReference type="PANTHER" id="PTHR45704">
    <property type="entry name" value="RAS-LIKE FAMILY MEMBER 11"/>
    <property type="match status" value="1"/>
</dbReference>
<dbReference type="Pfam" id="PF00071">
    <property type="entry name" value="Ras"/>
    <property type="match status" value="1"/>
</dbReference>
<dbReference type="PRINTS" id="PR00449">
    <property type="entry name" value="RASTRNSFRMNG"/>
</dbReference>
<dbReference type="SMART" id="SM00175">
    <property type="entry name" value="RAB"/>
    <property type="match status" value="1"/>
</dbReference>
<dbReference type="SMART" id="SM00173">
    <property type="entry name" value="RAS"/>
    <property type="match status" value="1"/>
</dbReference>
<dbReference type="SMART" id="SM00174">
    <property type="entry name" value="RHO"/>
    <property type="match status" value="1"/>
</dbReference>
<dbReference type="SUPFAM" id="SSF52540">
    <property type="entry name" value="P-loop containing nucleoside triphosphate hydrolases"/>
    <property type="match status" value="1"/>
</dbReference>
<dbReference type="PROSITE" id="PS51421">
    <property type="entry name" value="RAS"/>
    <property type="match status" value="1"/>
</dbReference>
<proteinExistence type="evidence at transcript level"/>
<comment type="catalytic activity">
    <reaction evidence="1">
        <text>GTP + H2O = GDP + phosphate + H(+)</text>
        <dbReference type="Rhea" id="RHEA:19669"/>
        <dbReference type="ChEBI" id="CHEBI:15377"/>
        <dbReference type="ChEBI" id="CHEBI:15378"/>
        <dbReference type="ChEBI" id="CHEBI:37565"/>
        <dbReference type="ChEBI" id="CHEBI:43474"/>
        <dbReference type="ChEBI" id="CHEBI:58189"/>
        <dbReference type="EC" id="3.6.5.2"/>
    </reaction>
</comment>
<comment type="similarity">
    <text evidence="3">Belongs to the small GTPase superfamily. Ras family.</text>
</comment>
<evidence type="ECO:0000250" key="1">
    <source>
        <dbReference type="UniProtKB" id="P01116"/>
    </source>
</evidence>
<evidence type="ECO:0000250" key="2">
    <source>
        <dbReference type="UniProtKB" id="Q96A58"/>
    </source>
</evidence>
<evidence type="ECO:0000255" key="3"/>
<evidence type="ECO:0000256" key="4">
    <source>
        <dbReference type="SAM" id="MobiDB-lite"/>
    </source>
</evidence>
<evidence type="ECO:0000303" key="5">
    <source>
    </source>
</evidence>
<evidence type="ECO:0000305" key="6"/>
<evidence type="ECO:0000312" key="7">
    <source>
        <dbReference type="EMBL" id="AAH41294.1"/>
    </source>
</evidence>
<evidence type="ECO:0000312" key="8">
    <source>
        <dbReference type="EMBL" id="DAA02255.1"/>
    </source>
</evidence>
<keyword id="KW-0342">GTP-binding</keyword>
<keyword id="KW-0378">Hydrolase</keyword>
<keyword id="KW-0547">Nucleotide-binding</keyword>
<keyword id="KW-1185">Reference proteome</keyword>
<reference evidence="7" key="1">
    <citation type="submission" date="2002-12" db="EMBL/GenBank/DDBJ databases">
        <authorList>
            <consortium name="NIH - Xenopus Gene Collection (XGC) project"/>
        </authorList>
    </citation>
    <scope>NUCLEOTIDE SEQUENCE [LARGE SCALE MRNA]</scope>
    <source>
        <tissue evidence="7">Embryo</tissue>
    </source>
</reference>
<reference evidence="6 8" key="2">
    <citation type="journal article" date="2004" name="Biochem. Biophys. Res. Commun.">
        <title>Rasl11a, member of a novel small monomeric GTPase gene family, is differentially expressed in prostate tumors.</title>
        <authorList>
            <person name="Louro R."/>
            <person name="Nakaya H.I."/>
            <person name="Paquola A.C.M."/>
            <person name="Martins E.A.L."/>
            <person name="da Silva A.M."/>
            <person name="Verjovski-Almeida S."/>
            <person name="Reis E.M."/>
        </authorList>
    </citation>
    <scope>IDENTIFICATION</scope>
</reference>
<name>RSLBB_XENLA</name>
<sequence>MRLIQNMCTITEYPPATNTDCGSSSSAGTASSRVIKIAVVGGSGVGKTALVVRFLTKRFIGDYERNAGNLYSRQVQIDGTNLAIQVQDTPGVQINEQNLESNEQLNKSLRWADAVVIVFSITDCKSFDLISHLHRHARQLHPDNRIPIVIVANKADLLHLKQVEPQHGLQLANMLGCTFYEVSVSENYNDVYNAFQVLCKEISKQQNTGTSERRKNSIIPRPKSPNMQDLKRRFKQALSSKVRTATSV</sequence>
<accession>Q8AVS6</accession>